<accession>B4TPK8</accession>
<comment type="function">
    <text evidence="1">NDH-1 shuttles electrons from NADH, via FMN and iron-sulfur (Fe-S) centers, to quinones in the respiratory chain. The immediate electron acceptor for the enzyme in this species is believed to be ubiquinone. Couples the redox reaction to proton translocation (for every two electrons transferred, four hydrogen ions are translocated across the cytoplasmic membrane), and thus conserves the redox energy in a proton gradient.</text>
</comment>
<comment type="catalytic activity">
    <reaction evidence="1">
        <text>a quinone + NADH + 5 H(+)(in) = a quinol + NAD(+) + 4 H(+)(out)</text>
        <dbReference type="Rhea" id="RHEA:57888"/>
        <dbReference type="ChEBI" id="CHEBI:15378"/>
        <dbReference type="ChEBI" id="CHEBI:24646"/>
        <dbReference type="ChEBI" id="CHEBI:57540"/>
        <dbReference type="ChEBI" id="CHEBI:57945"/>
        <dbReference type="ChEBI" id="CHEBI:132124"/>
    </reaction>
</comment>
<comment type="subunit">
    <text evidence="1">NDH-1 is composed of 13 different subunits. Subunits NuoB, CD, E, F, and G constitute the peripheral sector of the complex.</text>
</comment>
<comment type="subcellular location">
    <subcellularLocation>
        <location evidence="1">Cell inner membrane</location>
        <topology evidence="1">Peripheral membrane protein</topology>
        <orientation evidence="1">Cytoplasmic side</orientation>
    </subcellularLocation>
</comment>
<comment type="similarity">
    <text evidence="1">In the N-terminal section; belongs to the complex I 30 kDa subunit family.</text>
</comment>
<comment type="similarity">
    <text evidence="1">In the C-terminal section; belongs to the complex I 49 kDa subunit family.</text>
</comment>
<keyword id="KW-0997">Cell inner membrane</keyword>
<keyword id="KW-1003">Cell membrane</keyword>
<keyword id="KW-0472">Membrane</keyword>
<keyword id="KW-0511">Multifunctional enzyme</keyword>
<keyword id="KW-0520">NAD</keyword>
<keyword id="KW-0874">Quinone</keyword>
<keyword id="KW-1278">Translocase</keyword>
<keyword id="KW-0813">Transport</keyword>
<keyword id="KW-0830">Ubiquinone</keyword>
<sequence length="600" mass="68861">MVNNMTDLTAQDAAWSTRDHLDDPVIGELRNRFGPDAFTVQATRTGIPVVWVKREQLLEVGDFLKKLPKPYVMLFDLHGMDERLRTHRDGLPAADFSVFYHLISIERNRDIMLKVALSENDLRVPTFTKLFPNANWYERETWEMFGIDIEGHPHLTRIMMPQTWEGHPLRKDYPARATEFDPFELTKAKQDLEMEALTFKPEDWGMKRGTDNEDFMFLNLGPNHPSAHGAFRIILQLDGEEIVDCVPDIGYHHRGAEKMGERQSWHSYIPYTDRIEYLGGCVNEMPYVLAVEKLAGITVPDRVNVIRVMLSELFRINSHLLYISTFIQDVGAMTPVFFAFTDRQKIYDLVEAITGFRMHPAWFRIGGVAHDLPRGWDRLLREFLEWMPKRLDSYEKAALRNTILKGRSQGVAAYGAKEALEWGTTGAGLRATGIDFDVRKWRPYSGYENFDFEVPVGGGVSDCYTRVMLKVEELRQSLRILQQCLDNMPEGPFKADHPLTTPPPKERTLQHIETLITHFLQVSWGPVMPAQESFQMVEATKGINSYYLTSDGSTMSYRTRVRTPSFAHLQQIPSAIRGSLVSDLIVYLGSIDFVMSDVDR</sequence>
<name>NUOCD_SALSV</name>
<gene>
    <name evidence="1" type="primary">nuoC</name>
    <name evidence="1" type="synonym">nuoCD</name>
    <name evidence="1" type="synonym">nuoD</name>
    <name type="ordered locus">SeSA_A2554</name>
</gene>
<feature type="chain" id="PRO_0000358691" description="NADH-quinone oxidoreductase subunit C/D">
    <location>
        <begin position="1"/>
        <end position="600"/>
    </location>
</feature>
<feature type="region of interest" description="NADH dehydrogenase I subunit C" evidence="1">
    <location>
        <begin position="1"/>
        <end position="190"/>
    </location>
</feature>
<feature type="region of interest" description="NADH dehydrogenase I subunit D" evidence="1">
    <location>
        <begin position="214"/>
        <end position="600"/>
    </location>
</feature>
<organism>
    <name type="scientific">Salmonella schwarzengrund (strain CVM19633)</name>
    <dbReference type="NCBI Taxonomy" id="439843"/>
    <lineage>
        <taxon>Bacteria</taxon>
        <taxon>Pseudomonadati</taxon>
        <taxon>Pseudomonadota</taxon>
        <taxon>Gammaproteobacteria</taxon>
        <taxon>Enterobacterales</taxon>
        <taxon>Enterobacteriaceae</taxon>
        <taxon>Salmonella</taxon>
    </lineage>
</organism>
<reference key="1">
    <citation type="journal article" date="2011" name="J. Bacteriol.">
        <title>Comparative genomics of 28 Salmonella enterica isolates: evidence for CRISPR-mediated adaptive sublineage evolution.</title>
        <authorList>
            <person name="Fricke W.F."/>
            <person name="Mammel M.K."/>
            <person name="McDermott P.F."/>
            <person name="Tartera C."/>
            <person name="White D.G."/>
            <person name="Leclerc J.E."/>
            <person name="Ravel J."/>
            <person name="Cebula T.A."/>
        </authorList>
    </citation>
    <scope>NUCLEOTIDE SEQUENCE [LARGE SCALE GENOMIC DNA]</scope>
    <source>
        <strain>CVM19633</strain>
    </source>
</reference>
<protein>
    <recommendedName>
        <fullName evidence="1">NADH-quinone oxidoreductase subunit C/D</fullName>
        <ecNumber evidence="1">7.1.1.-</ecNumber>
    </recommendedName>
    <alternativeName>
        <fullName evidence="1">NADH dehydrogenase I subunit C/D</fullName>
    </alternativeName>
    <alternativeName>
        <fullName evidence="1">NDH-1 subunit C/D</fullName>
    </alternativeName>
</protein>
<proteinExistence type="inferred from homology"/>
<dbReference type="EC" id="7.1.1.-" evidence="1"/>
<dbReference type="EMBL" id="CP001127">
    <property type="protein sequence ID" value="ACF91541.1"/>
    <property type="molecule type" value="Genomic_DNA"/>
</dbReference>
<dbReference type="RefSeq" id="WP_000247855.1">
    <property type="nucleotide sequence ID" value="NC_011094.1"/>
</dbReference>
<dbReference type="SMR" id="B4TPK8"/>
<dbReference type="KEGG" id="sew:SeSA_A2554"/>
<dbReference type="HOGENOM" id="CLU_015134_3_2_6"/>
<dbReference type="Proteomes" id="UP000001865">
    <property type="component" value="Chromosome"/>
</dbReference>
<dbReference type="GO" id="GO:0030964">
    <property type="term" value="C:NADH dehydrogenase complex"/>
    <property type="evidence" value="ECO:0007669"/>
    <property type="project" value="InterPro"/>
</dbReference>
<dbReference type="GO" id="GO:0005886">
    <property type="term" value="C:plasma membrane"/>
    <property type="evidence" value="ECO:0007669"/>
    <property type="project" value="UniProtKB-SubCell"/>
</dbReference>
<dbReference type="GO" id="GO:0051287">
    <property type="term" value="F:NAD binding"/>
    <property type="evidence" value="ECO:0007669"/>
    <property type="project" value="InterPro"/>
</dbReference>
<dbReference type="GO" id="GO:0008137">
    <property type="term" value="F:NADH dehydrogenase (ubiquinone) activity"/>
    <property type="evidence" value="ECO:0007669"/>
    <property type="project" value="InterPro"/>
</dbReference>
<dbReference type="GO" id="GO:0050136">
    <property type="term" value="F:NADH:ubiquinone reductase (non-electrogenic) activity"/>
    <property type="evidence" value="ECO:0007669"/>
    <property type="project" value="UniProtKB-UniRule"/>
</dbReference>
<dbReference type="GO" id="GO:0048038">
    <property type="term" value="F:quinone binding"/>
    <property type="evidence" value="ECO:0007669"/>
    <property type="project" value="UniProtKB-KW"/>
</dbReference>
<dbReference type="FunFam" id="1.10.645.10:FF:000001">
    <property type="entry name" value="NADH-quinone oxidoreductase subunit C/D"/>
    <property type="match status" value="1"/>
</dbReference>
<dbReference type="FunFam" id="3.30.460.80:FF:000001">
    <property type="entry name" value="NADH-quinone oxidoreductase subunit C/D"/>
    <property type="match status" value="1"/>
</dbReference>
<dbReference type="Gene3D" id="1.10.645.10">
    <property type="entry name" value="Cytochrome-c3 Hydrogenase, chain B"/>
    <property type="match status" value="1"/>
</dbReference>
<dbReference type="Gene3D" id="3.30.460.80">
    <property type="entry name" value="NADH:ubiquinone oxidoreductase, 30kDa subunit"/>
    <property type="match status" value="1"/>
</dbReference>
<dbReference type="HAMAP" id="MF_01359">
    <property type="entry name" value="NDH1_NuoCD_1"/>
    <property type="match status" value="1"/>
</dbReference>
<dbReference type="HAMAP" id="MF_01358">
    <property type="entry name" value="NDH1_NuoD"/>
    <property type="match status" value="1"/>
</dbReference>
<dbReference type="InterPro" id="IPR010218">
    <property type="entry name" value="NADH_DH_suC"/>
</dbReference>
<dbReference type="InterPro" id="IPR023062">
    <property type="entry name" value="NADH_DH_suCD"/>
</dbReference>
<dbReference type="InterPro" id="IPR001135">
    <property type="entry name" value="NADH_Q_OxRdtase_suD"/>
</dbReference>
<dbReference type="InterPro" id="IPR037232">
    <property type="entry name" value="NADH_quin_OxRdtase_su_C/D-like"/>
</dbReference>
<dbReference type="InterPro" id="IPR001268">
    <property type="entry name" value="NADH_UbQ_OxRdtase_30kDa_su"/>
</dbReference>
<dbReference type="InterPro" id="IPR014029">
    <property type="entry name" value="NADH_UbQ_OxRdtase_49kDa_CS"/>
</dbReference>
<dbReference type="InterPro" id="IPR022885">
    <property type="entry name" value="NDH1_su_D/H"/>
</dbReference>
<dbReference type="InterPro" id="IPR029014">
    <property type="entry name" value="NiFe-Hase_large"/>
</dbReference>
<dbReference type="NCBIfam" id="TIGR01961">
    <property type="entry name" value="NuoC_fam"/>
    <property type="match status" value="1"/>
</dbReference>
<dbReference type="NCBIfam" id="TIGR01962">
    <property type="entry name" value="NuoD"/>
    <property type="match status" value="1"/>
</dbReference>
<dbReference type="NCBIfam" id="NF004739">
    <property type="entry name" value="PRK06075.1"/>
    <property type="match status" value="1"/>
</dbReference>
<dbReference type="NCBIfam" id="NF008728">
    <property type="entry name" value="PRK11742.1"/>
    <property type="match status" value="1"/>
</dbReference>
<dbReference type="PANTHER" id="PTHR11993:SF45">
    <property type="entry name" value="NADH-QUINONE OXIDOREDUCTASE SUBUNIT C_D"/>
    <property type="match status" value="1"/>
</dbReference>
<dbReference type="PANTHER" id="PTHR11993">
    <property type="entry name" value="NADH-UBIQUINONE OXIDOREDUCTASE 49 KDA SUBUNIT"/>
    <property type="match status" value="1"/>
</dbReference>
<dbReference type="Pfam" id="PF00329">
    <property type="entry name" value="Complex1_30kDa"/>
    <property type="match status" value="1"/>
</dbReference>
<dbReference type="Pfam" id="PF00346">
    <property type="entry name" value="Complex1_49kDa"/>
    <property type="match status" value="1"/>
</dbReference>
<dbReference type="SUPFAM" id="SSF56762">
    <property type="entry name" value="HydB/Nqo4-like"/>
    <property type="match status" value="1"/>
</dbReference>
<dbReference type="SUPFAM" id="SSF143243">
    <property type="entry name" value="Nqo5-like"/>
    <property type="match status" value="1"/>
</dbReference>
<dbReference type="PROSITE" id="PS00535">
    <property type="entry name" value="COMPLEX1_49K"/>
    <property type="match status" value="1"/>
</dbReference>
<evidence type="ECO:0000255" key="1">
    <source>
        <dbReference type="HAMAP-Rule" id="MF_01359"/>
    </source>
</evidence>